<name>RPOZ_CLOPS</name>
<gene>
    <name evidence="1" type="primary">rpoZ</name>
    <name type="ordered locus">CPR_1718</name>
</gene>
<proteinExistence type="inferred from homology"/>
<feature type="chain" id="PRO_1000005917" description="DNA-directed RNA polymerase subunit omega">
    <location>
        <begin position="1"/>
        <end position="70"/>
    </location>
</feature>
<keyword id="KW-0240">DNA-directed RNA polymerase</keyword>
<keyword id="KW-0548">Nucleotidyltransferase</keyword>
<keyword id="KW-0804">Transcription</keyword>
<keyword id="KW-0808">Transferase</keyword>
<reference key="1">
    <citation type="journal article" date="2006" name="Genome Res.">
        <title>Skewed genomic variability in strains of the toxigenic bacterial pathogen, Clostridium perfringens.</title>
        <authorList>
            <person name="Myers G.S.A."/>
            <person name="Rasko D.A."/>
            <person name="Cheung J.K."/>
            <person name="Ravel J."/>
            <person name="Seshadri R."/>
            <person name="DeBoy R.T."/>
            <person name="Ren Q."/>
            <person name="Varga J."/>
            <person name="Awad M.M."/>
            <person name="Brinkac L.M."/>
            <person name="Daugherty S.C."/>
            <person name="Haft D.H."/>
            <person name="Dodson R.J."/>
            <person name="Madupu R."/>
            <person name="Nelson W.C."/>
            <person name="Rosovitz M.J."/>
            <person name="Sullivan S.A."/>
            <person name="Khouri H."/>
            <person name="Dimitrov G.I."/>
            <person name="Watkins K.L."/>
            <person name="Mulligan S."/>
            <person name="Benton J."/>
            <person name="Radune D."/>
            <person name="Fisher D.J."/>
            <person name="Atkins H.S."/>
            <person name="Hiscox T."/>
            <person name="Jost B.H."/>
            <person name="Billington S.J."/>
            <person name="Songer J.G."/>
            <person name="McClane B.A."/>
            <person name="Titball R.W."/>
            <person name="Rood J.I."/>
            <person name="Melville S.B."/>
            <person name="Paulsen I.T."/>
        </authorList>
    </citation>
    <scope>NUCLEOTIDE SEQUENCE [LARGE SCALE GENOMIC DNA]</scope>
    <source>
        <strain>SM101 / Type A</strain>
    </source>
</reference>
<comment type="function">
    <text evidence="1">Promotes RNA polymerase assembly. Latches the N- and C-terminal regions of the beta' subunit thereby facilitating its interaction with the beta and alpha subunits.</text>
</comment>
<comment type="catalytic activity">
    <reaction evidence="1">
        <text>RNA(n) + a ribonucleoside 5'-triphosphate = RNA(n+1) + diphosphate</text>
        <dbReference type="Rhea" id="RHEA:21248"/>
        <dbReference type="Rhea" id="RHEA-COMP:14527"/>
        <dbReference type="Rhea" id="RHEA-COMP:17342"/>
        <dbReference type="ChEBI" id="CHEBI:33019"/>
        <dbReference type="ChEBI" id="CHEBI:61557"/>
        <dbReference type="ChEBI" id="CHEBI:140395"/>
        <dbReference type="EC" id="2.7.7.6"/>
    </reaction>
</comment>
<comment type="subunit">
    <text evidence="1">The RNAP catalytic core consists of 2 alpha, 1 beta, 1 beta' and 1 omega subunit. When a sigma factor is associated with the core the holoenzyme is formed, which can initiate transcription.</text>
</comment>
<comment type="similarity">
    <text evidence="1">Belongs to the RNA polymerase subunit omega family.</text>
</comment>
<evidence type="ECO:0000255" key="1">
    <source>
        <dbReference type="HAMAP-Rule" id="MF_00366"/>
    </source>
</evidence>
<accession>Q0SS74</accession>
<sequence>MNNSMINPSIVDLLKRVEDRYSLVILSAKRARQIIDGAETFVDVESNKPLTIAINEIDEGFVNYKDTEEK</sequence>
<dbReference type="EC" id="2.7.7.6" evidence="1"/>
<dbReference type="EMBL" id="CP000312">
    <property type="protein sequence ID" value="ABG86929.1"/>
    <property type="molecule type" value="Genomic_DNA"/>
</dbReference>
<dbReference type="RefSeq" id="WP_003449449.1">
    <property type="nucleotide sequence ID" value="NZ_CAXVKH010000001.1"/>
</dbReference>
<dbReference type="SMR" id="Q0SS74"/>
<dbReference type="GeneID" id="93001716"/>
<dbReference type="KEGG" id="cpr:CPR_1718"/>
<dbReference type="Proteomes" id="UP000001824">
    <property type="component" value="Chromosome"/>
</dbReference>
<dbReference type="GO" id="GO:0000428">
    <property type="term" value="C:DNA-directed RNA polymerase complex"/>
    <property type="evidence" value="ECO:0007669"/>
    <property type="project" value="UniProtKB-KW"/>
</dbReference>
<dbReference type="GO" id="GO:0003677">
    <property type="term" value="F:DNA binding"/>
    <property type="evidence" value="ECO:0007669"/>
    <property type="project" value="UniProtKB-UniRule"/>
</dbReference>
<dbReference type="GO" id="GO:0003899">
    <property type="term" value="F:DNA-directed RNA polymerase activity"/>
    <property type="evidence" value="ECO:0007669"/>
    <property type="project" value="UniProtKB-UniRule"/>
</dbReference>
<dbReference type="GO" id="GO:0006351">
    <property type="term" value="P:DNA-templated transcription"/>
    <property type="evidence" value="ECO:0007669"/>
    <property type="project" value="UniProtKB-UniRule"/>
</dbReference>
<dbReference type="Gene3D" id="3.90.940.10">
    <property type="match status" value="1"/>
</dbReference>
<dbReference type="HAMAP" id="MF_00366">
    <property type="entry name" value="RNApol_bact_RpoZ"/>
    <property type="match status" value="1"/>
</dbReference>
<dbReference type="InterPro" id="IPR003716">
    <property type="entry name" value="DNA-dir_RNA_pol_omega"/>
</dbReference>
<dbReference type="InterPro" id="IPR006110">
    <property type="entry name" value="Pol_omega/Rpo6/RPB6"/>
</dbReference>
<dbReference type="InterPro" id="IPR036161">
    <property type="entry name" value="RPB6/omega-like_sf"/>
</dbReference>
<dbReference type="NCBIfam" id="TIGR00690">
    <property type="entry name" value="rpoZ"/>
    <property type="match status" value="1"/>
</dbReference>
<dbReference type="PANTHER" id="PTHR34476">
    <property type="entry name" value="DNA-DIRECTED RNA POLYMERASE SUBUNIT OMEGA"/>
    <property type="match status" value="1"/>
</dbReference>
<dbReference type="PANTHER" id="PTHR34476:SF1">
    <property type="entry name" value="DNA-DIRECTED RNA POLYMERASE SUBUNIT OMEGA"/>
    <property type="match status" value="1"/>
</dbReference>
<dbReference type="Pfam" id="PF01192">
    <property type="entry name" value="RNA_pol_Rpb6"/>
    <property type="match status" value="1"/>
</dbReference>
<dbReference type="SMART" id="SM01409">
    <property type="entry name" value="RNA_pol_Rpb6"/>
    <property type="match status" value="1"/>
</dbReference>
<dbReference type="SUPFAM" id="SSF63562">
    <property type="entry name" value="RPB6/omega subunit-like"/>
    <property type="match status" value="1"/>
</dbReference>
<protein>
    <recommendedName>
        <fullName evidence="1">DNA-directed RNA polymerase subunit omega</fullName>
        <shortName evidence="1">RNAP omega subunit</shortName>
        <ecNumber evidence="1">2.7.7.6</ecNumber>
    </recommendedName>
    <alternativeName>
        <fullName evidence="1">RNA polymerase omega subunit</fullName>
    </alternativeName>
    <alternativeName>
        <fullName evidence="1">Transcriptase subunit omega</fullName>
    </alternativeName>
</protein>
<organism>
    <name type="scientific">Clostridium perfringens (strain SM101 / Type A)</name>
    <dbReference type="NCBI Taxonomy" id="289380"/>
    <lineage>
        <taxon>Bacteria</taxon>
        <taxon>Bacillati</taxon>
        <taxon>Bacillota</taxon>
        <taxon>Clostridia</taxon>
        <taxon>Eubacteriales</taxon>
        <taxon>Clostridiaceae</taxon>
        <taxon>Clostridium</taxon>
    </lineage>
</organism>